<proteinExistence type="inferred from homology"/>
<keyword id="KW-0963">Cytoplasm</keyword>
<keyword id="KW-1185">Reference proteome</keyword>
<organism>
    <name type="scientific">Photorhabdus laumondii subsp. laumondii (strain DSM 15139 / CIP 105565 / TT01)</name>
    <name type="common">Photorhabdus luminescens subsp. laumondii</name>
    <dbReference type="NCBI Taxonomy" id="243265"/>
    <lineage>
        <taxon>Bacteria</taxon>
        <taxon>Pseudomonadati</taxon>
        <taxon>Pseudomonadota</taxon>
        <taxon>Gammaproteobacteria</taxon>
        <taxon>Enterobacterales</taxon>
        <taxon>Morganellaceae</taxon>
        <taxon>Photorhabdus</taxon>
    </lineage>
</organism>
<name>USPE_PHOLL</name>
<reference key="1">
    <citation type="journal article" date="2003" name="Nat. Biotechnol.">
        <title>The genome sequence of the entomopathogenic bacterium Photorhabdus luminescens.</title>
        <authorList>
            <person name="Duchaud E."/>
            <person name="Rusniok C."/>
            <person name="Frangeul L."/>
            <person name="Buchrieser C."/>
            <person name="Givaudan A."/>
            <person name="Taourit S."/>
            <person name="Bocs S."/>
            <person name="Boursaux-Eude C."/>
            <person name="Chandler M."/>
            <person name="Charles J.-F."/>
            <person name="Dassa E."/>
            <person name="Derose R."/>
            <person name="Derzelle S."/>
            <person name="Freyssinet G."/>
            <person name="Gaudriault S."/>
            <person name="Medigue C."/>
            <person name="Lanois A."/>
            <person name="Powell K."/>
            <person name="Siguier P."/>
            <person name="Vincent R."/>
            <person name="Wingate V."/>
            <person name="Zouine M."/>
            <person name="Glaser P."/>
            <person name="Boemare N."/>
            <person name="Danchin A."/>
            <person name="Kunst F."/>
        </authorList>
    </citation>
    <scope>NUCLEOTIDE SEQUENCE [LARGE SCALE GENOMIC DNA]</scope>
    <source>
        <strain>DSM 15139 / CIP 105565 / TT01</strain>
    </source>
</reference>
<dbReference type="EMBL" id="BX571866">
    <property type="protein sequence ID" value="CAE14471.1"/>
    <property type="molecule type" value="Genomic_DNA"/>
</dbReference>
<dbReference type="RefSeq" id="WP_011146432.1">
    <property type="nucleotide sequence ID" value="NC_005126.1"/>
</dbReference>
<dbReference type="SMR" id="P60005"/>
<dbReference type="STRING" id="243265.plu2178"/>
<dbReference type="GeneID" id="48848456"/>
<dbReference type="KEGG" id="plu:plu2178"/>
<dbReference type="eggNOG" id="COG0589">
    <property type="taxonomic scope" value="Bacteria"/>
</dbReference>
<dbReference type="HOGENOM" id="CLU_049301_1_2_6"/>
<dbReference type="OrthoDB" id="239260at2"/>
<dbReference type="Proteomes" id="UP000002514">
    <property type="component" value="Chromosome"/>
</dbReference>
<dbReference type="GO" id="GO:0005737">
    <property type="term" value="C:cytoplasm"/>
    <property type="evidence" value="ECO:0007669"/>
    <property type="project" value="UniProtKB-SubCell"/>
</dbReference>
<dbReference type="CDD" id="cd23943">
    <property type="entry name" value="USP-E_repeat1"/>
    <property type="match status" value="1"/>
</dbReference>
<dbReference type="CDD" id="cd23660">
    <property type="entry name" value="USP-E_repeat2"/>
    <property type="match status" value="1"/>
</dbReference>
<dbReference type="Gene3D" id="3.40.50.12370">
    <property type="match status" value="1"/>
</dbReference>
<dbReference type="InterPro" id="IPR006016">
    <property type="entry name" value="UspA"/>
</dbReference>
<dbReference type="NCBIfam" id="NF008380">
    <property type="entry name" value="PRK11175.1"/>
    <property type="match status" value="1"/>
</dbReference>
<dbReference type="PANTHER" id="PTHR47892">
    <property type="entry name" value="UNIVERSAL STRESS PROTEIN E"/>
    <property type="match status" value="1"/>
</dbReference>
<dbReference type="PANTHER" id="PTHR47892:SF1">
    <property type="entry name" value="UNIVERSAL STRESS PROTEIN E"/>
    <property type="match status" value="1"/>
</dbReference>
<dbReference type="Pfam" id="PF00582">
    <property type="entry name" value="Usp"/>
    <property type="match status" value="2"/>
</dbReference>
<dbReference type="SUPFAM" id="SSF52402">
    <property type="entry name" value="Adenine nucleotide alpha hydrolases-like"/>
    <property type="match status" value="2"/>
</dbReference>
<protein>
    <recommendedName>
        <fullName>Universal stress protein E</fullName>
    </recommendedName>
</protein>
<comment type="function">
    <text evidence="1">Required for resistance to DNA-damaging agents.</text>
</comment>
<comment type="subcellular location">
    <subcellularLocation>
        <location evidence="1">Cytoplasm</location>
    </subcellularLocation>
</comment>
<comment type="similarity">
    <text evidence="2">Belongs to the universal stress protein A family.</text>
</comment>
<evidence type="ECO:0000250" key="1"/>
<evidence type="ECO:0000305" key="2"/>
<gene>
    <name type="primary">uspE</name>
    <name type="ordered locus">plu2178</name>
</gene>
<accession>P60005</accession>
<sequence>MANYQNLLVVIDPSQDDQPALRRAVYIVQRNGGRIKAFLPIYDLSYEMTTLLSPEEGSTMRKGVTSQRTAWLKQQAYYYLEAGIDIEIKVVWHNRPYEAIIQEVITGNHDLLLKMTHKHDKLGSLIFTPLDWQLLRKCPCPVWMVKDQIWPDQGSVVVAVNLSNEESYHHELNLKLVKETQELANQVMKNPEIHLVSAYPVAPLNIAIELPDFNPSVYNHALRGQHLIAMKELRQTFCIDEKYTHIHEGLPESVIPQMCDEMNAGIIVLGILGRTGLSAAFLGNTAEHVIDHLKCDILTIKPDGFECPIKAAKE</sequence>
<feature type="chain" id="PRO_0000147421" description="Universal stress protein E">
    <location>
        <begin position="1"/>
        <end position="314"/>
    </location>
</feature>